<name>GCSPA_HALSA</name>
<dbReference type="EC" id="1.4.4.2" evidence="1"/>
<dbReference type="EMBL" id="AE004437">
    <property type="protein sequence ID" value="AAG19868.1"/>
    <property type="molecule type" value="Genomic_DNA"/>
</dbReference>
<dbReference type="PIR" id="H84312">
    <property type="entry name" value="H84312"/>
</dbReference>
<dbReference type="RefSeq" id="WP_010903166.1">
    <property type="nucleotide sequence ID" value="NC_002607.1"/>
</dbReference>
<dbReference type="SMR" id="Q9HPJ9"/>
<dbReference type="STRING" id="64091.VNG_1603G"/>
<dbReference type="PaxDb" id="64091-VNG_1603G"/>
<dbReference type="GeneID" id="68694282"/>
<dbReference type="KEGG" id="hal:VNG_1603G"/>
<dbReference type="PATRIC" id="fig|64091.14.peg.1221"/>
<dbReference type="HOGENOM" id="CLU_004620_0_2_2"/>
<dbReference type="InParanoid" id="Q9HPJ9"/>
<dbReference type="OrthoDB" id="17655at2157"/>
<dbReference type="PhylomeDB" id="Q9HPJ9"/>
<dbReference type="Proteomes" id="UP000000554">
    <property type="component" value="Chromosome"/>
</dbReference>
<dbReference type="GO" id="GO:0004375">
    <property type="term" value="F:glycine dehydrogenase (decarboxylating) activity"/>
    <property type="evidence" value="ECO:0007669"/>
    <property type="project" value="UniProtKB-EC"/>
</dbReference>
<dbReference type="GO" id="GO:0019464">
    <property type="term" value="P:glycine decarboxylation via glycine cleavage system"/>
    <property type="evidence" value="ECO:0007669"/>
    <property type="project" value="UniProtKB-UniRule"/>
</dbReference>
<dbReference type="GO" id="GO:0009116">
    <property type="term" value="P:nucleoside metabolic process"/>
    <property type="evidence" value="ECO:0007669"/>
    <property type="project" value="InterPro"/>
</dbReference>
<dbReference type="CDD" id="cd00613">
    <property type="entry name" value="GDC-P"/>
    <property type="match status" value="1"/>
</dbReference>
<dbReference type="Gene3D" id="3.90.1150.10">
    <property type="entry name" value="Aspartate Aminotransferase, domain 1"/>
    <property type="match status" value="1"/>
</dbReference>
<dbReference type="Gene3D" id="3.40.640.10">
    <property type="entry name" value="Type I PLP-dependent aspartate aminotransferase-like (Major domain)"/>
    <property type="match status" value="1"/>
</dbReference>
<dbReference type="HAMAP" id="MF_00712">
    <property type="entry name" value="GcvPA"/>
    <property type="match status" value="1"/>
</dbReference>
<dbReference type="InterPro" id="IPR023010">
    <property type="entry name" value="GcvPA"/>
</dbReference>
<dbReference type="InterPro" id="IPR049315">
    <property type="entry name" value="GDC-P_N"/>
</dbReference>
<dbReference type="InterPro" id="IPR020581">
    <property type="entry name" value="GDC_P"/>
</dbReference>
<dbReference type="InterPro" id="IPR015424">
    <property type="entry name" value="PyrdxlP-dep_Trfase"/>
</dbReference>
<dbReference type="InterPro" id="IPR015421">
    <property type="entry name" value="PyrdxlP-dep_Trfase_major"/>
</dbReference>
<dbReference type="InterPro" id="IPR015422">
    <property type="entry name" value="PyrdxlP-dep_Trfase_small"/>
</dbReference>
<dbReference type="NCBIfam" id="NF001696">
    <property type="entry name" value="PRK00451.1"/>
    <property type="match status" value="1"/>
</dbReference>
<dbReference type="PANTHER" id="PTHR42806">
    <property type="entry name" value="GLYCINE CLEAVAGE SYSTEM P-PROTEIN"/>
    <property type="match status" value="1"/>
</dbReference>
<dbReference type="PANTHER" id="PTHR42806:SF1">
    <property type="entry name" value="GLYCINE DEHYDROGENASE (DECARBOXYLATING)"/>
    <property type="match status" value="1"/>
</dbReference>
<dbReference type="Pfam" id="PF02347">
    <property type="entry name" value="GDC-P"/>
    <property type="match status" value="1"/>
</dbReference>
<dbReference type="SUPFAM" id="SSF53383">
    <property type="entry name" value="PLP-dependent transferases"/>
    <property type="match status" value="1"/>
</dbReference>
<sequence>MSGSPYASPSEADTDAMLDAVGVDRVDELFDIPPEVSFDGEFGIDAKSEQAALRGVRRRLSDNDDLTEFLGRGHYEHYVPSLVDSVSQRSEFITSYTQYQPEITQGFLQVLFEYQSLLVELTGLGVANCSMYDAATALAEAALLAKRVRAADGNRVLVPGFVRDSHVDVLRNYTSGSDVVVERYATDAGNVDLDALEAAMDADVVMVYAENPTTCGTVEEQLCAVGDLADSHDALFCLGSDPVAMSILQRPVDVGADVVVGDASVLGMPTSYGTGLGVFATRKEFLRQVPGRLVGASEDDAGTRAFTLTLQTREQHIRKERATSNICTNQAWVALRAAIHAAWLGADGLVDLAERMVELPRDLAARLDDVSGVTAPVHDDRHHIREFQARTEQPAPAVASALEAEGFGVHAVDDHTIQVCVTDANEHATDAFVAAVREVSE</sequence>
<evidence type="ECO:0000255" key="1">
    <source>
        <dbReference type="HAMAP-Rule" id="MF_00712"/>
    </source>
</evidence>
<proteinExistence type="inferred from homology"/>
<organism>
    <name type="scientific">Halobacterium salinarum (strain ATCC 700922 / JCM 11081 / NRC-1)</name>
    <name type="common">Halobacterium halobium</name>
    <dbReference type="NCBI Taxonomy" id="64091"/>
    <lineage>
        <taxon>Archaea</taxon>
        <taxon>Methanobacteriati</taxon>
        <taxon>Methanobacteriota</taxon>
        <taxon>Stenosarchaea group</taxon>
        <taxon>Halobacteria</taxon>
        <taxon>Halobacteriales</taxon>
        <taxon>Halobacteriaceae</taxon>
        <taxon>Halobacterium</taxon>
        <taxon>Halobacterium salinarum NRC-34001</taxon>
    </lineage>
</organism>
<comment type="function">
    <text evidence="1">The glycine cleavage system catalyzes the degradation of glycine. The P protein binds the alpha-amino group of glycine through its pyridoxal phosphate cofactor; CO(2) is released and the remaining methylamine moiety is then transferred to the lipoamide cofactor of the H protein.</text>
</comment>
<comment type="catalytic activity">
    <reaction evidence="1">
        <text>N(6)-[(R)-lipoyl]-L-lysyl-[glycine-cleavage complex H protein] + glycine + H(+) = N(6)-[(R)-S(8)-aminomethyldihydrolipoyl]-L-lysyl-[glycine-cleavage complex H protein] + CO2</text>
        <dbReference type="Rhea" id="RHEA:24304"/>
        <dbReference type="Rhea" id="RHEA-COMP:10494"/>
        <dbReference type="Rhea" id="RHEA-COMP:10495"/>
        <dbReference type="ChEBI" id="CHEBI:15378"/>
        <dbReference type="ChEBI" id="CHEBI:16526"/>
        <dbReference type="ChEBI" id="CHEBI:57305"/>
        <dbReference type="ChEBI" id="CHEBI:83099"/>
        <dbReference type="ChEBI" id="CHEBI:83143"/>
        <dbReference type="EC" id="1.4.4.2"/>
    </reaction>
</comment>
<comment type="subunit">
    <text evidence="1">The glycine cleavage system is composed of four proteins: P, T, L and H. In this organism, the P 'protein' is a heterodimer of two subunits.</text>
</comment>
<comment type="similarity">
    <text evidence="1">Belongs to the GcvP family. N-terminal subunit subfamily.</text>
</comment>
<accession>Q9HPJ9</accession>
<gene>
    <name evidence="1" type="primary">gcvPA</name>
    <name type="synonym">gcvP1</name>
    <name type="ordered locus">VNG_1603G</name>
</gene>
<protein>
    <recommendedName>
        <fullName evidence="1">Probable glycine dehydrogenase (decarboxylating) subunit 1</fullName>
        <ecNumber evidence="1">1.4.4.2</ecNumber>
    </recommendedName>
    <alternativeName>
        <fullName evidence="1">Glycine cleavage system P-protein subunit 1</fullName>
    </alternativeName>
    <alternativeName>
        <fullName evidence="1">Glycine decarboxylase subunit 1</fullName>
    </alternativeName>
    <alternativeName>
        <fullName evidence="1">Glycine dehydrogenase (aminomethyl-transferring) subunit 1</fullName>
    </alternativeName>
</protein>
<feature type="chain" id="PRO_0000166983" description="Probable glycine dehydrogenase (decarboxylating) subunit 1">
    <location>
        <begin position="1"/>
        <end position="441"/>
    </location>
</feature>
<keyword id="KW-0560">Oxidoreductase</keyword>
<keyword id="KW-1185">Reference proteome</keyword>
<reference key="1">
    <citation type="journal article" date="2000" name="Proc. Natl. Acad. Sci. U.S.A.">
        <title>Genome sequence of Halobacterium species NRC-1.</title>
        <authorList>
            <person name="Ng W.V."/>
            <person name="Kennedy S.P."/>
            <person name="Mahairas G.G."/>
            <person name="Berquist B."/>
            <person name="Pan M."/>
            <person name="Shukla H.D."/>
            <person name="Lasky S.R."/>
            <person name="Baliga N.S."/>
            <person name="Thorsson V."/>
            <person name="Sbrogna J."/>
            <person name="Swartzell S."/>
            <person name="Weir D."/>
            <person name="Hall J."/>
            <person name="Dahl T.A."/>
            <person name="Welti R."/>
            <person name="Goo Y.A."/>
            <person name="Leithauser B."/>
            <person name="Keller K."/>
            <person name="Cruz R."/>
            <person name="Danson M.J."/>
            <person name="Hough D.W."/>
            <person name="Maddocks D.G."/>
            <person name="Jablonski P.E."/>
            <person name="Krebs M.P."/>
            <person name="Angevine C.M."/>
            <person name="Dale H."/>
            <person name="Isenbarger T.A."/>
            <person name="Peck R.F."/>
            <person name="Pohlschroder M."/>
            <person name="Spudich J.L."/>
            <person name="Jung K.-H."/>
            <person name="Alam M."/>
            <person name="Freitas T."/>
            <person name="Hou S."/>
            <person name="Daniels C.J."/>
            <person name="Dennis P.P."/>
            <person name="Omer A.D."/>
            <person name="Ebhardt H."/>
            <person name="Lowe T.M."/>
            <person name="Liang P."/>
            <person name="Riley M."/>
            <person name="Hood L."/>
            <person name="DasSarma S."/>
        </authorList>
    </citation>
    <scope>NUCLEOTIDE SEQUENCE [LARGE SCALE GENOMIC DNA]</scope>
    <source>
        <strain>ATCC 700922 / JCM 11081 / NRC-1</strain>
    </source>
</reference>